<organism>
    <name type="scientific">Rhodopseudomonas palustris (strain TIE-1)</name>
    <dbReference type="NCBI Taxonomy" id="395960"/>
    <lineage>
        <taxon>Bacteria</taxon>
        <taxon>Pseudomonadati</taxon>
        <taxon>Pseudomonadota</taxon>
        <taxon>Alphaproteobacteria</taxon>
        <taxon>Hyphomicrobiales</taxon>
        <taxon>Nitrobacteraceae</taxon>
        <taxon>Rhodopseudomonas</taxon>
    </lineage>
</organism>
<evidence type="ECO:0000255" key="1">
    <source>
        <dbReference type="HAMAP-Rule" id="MF_01217"/>
    </source>
</evidence>
<evidence type="ECO:0000255" key="2">
    <source>
        <dbReference type="PROSITE-ProRule" id="PRU00258"/>
    </source>
</evidence>
<protein>
    <recommendedName>
        <fullName evidence="1">Acyl carrier protein</fullName>
        <shortName evidence="1">ACP</shortName>
    </recommendedName>
</protein>
<proteinExistence type="inferred from homology"/>
<name>ACP_RHOPT</name>
<comment type="function">
    <text evidence="1">Carrier of the growing fatty acid chain in fatty acid biosynthesis.</text>
</comment>
<comment type="pathway">
    <text evidence="1">Lipid metabolism; fatty acid biosynthesis.</text>
</comment>
<comment type="subcellular location">
    <subcellularLocation>
        <location evidence="1">Cytoplasm</location>
    </subcellularLocation>
</comment>
<comment type="PTM">
    <text evidence="1">4'-phosphopantetheine is transferred from CoA to a specific serine of apo-ACP by AcpS. This modification is essential for activity because fatty acids are bound in thioester linkage to the sulfhydryl of the prosthetic group.</text>
</comment>
<comment type="similarity">
    <text evidence="1">Belongs to the acyl carrier protein (ACP) family.</text>
</comment>
<feature type="chain" id="PRO_1000139059" description="Acyl carrier protein">
    <location>
        <begin position="1"/>
        <end position="79"/>
    </location>
</feature>
<feature type="domain" description="Carrier" evidence="2">
    <location>
        <begin position="2"/>
        <end position="77"/>
    </location>
</feature>
<feature type="modified residue" description="O-(pantetheine 4'-phosphoryl)serine" evidence="2">
    <location>
        <position position="37"/>
    </location>
</feature>
<accession>B3Q9T1</accession>
<dbReference type="EMBL" id="CP001096">
    <property type="protein sequence ID" value="ACF01984.1"/>
    <property type="molecule type" value="Genomic_DNA"/>
</dbReference>
<dbReference type="RefSeq" id="WP_002716125.1">
    <property type="nucleotide sequence ID" value="NC_011004.1"/>
</dbReference>
<dbReference type="SMR" id="B3Q9T1"/>
<dbReference type="KEGG" id="rpt:Rpal_3483"/>
<dbReference type="HOGENOM" id="CLU_108696_5_1_5"/>
<dbReference type="OrthoDB" id="9804551at2"/>
<dbReference type="UniPathway" id="UPA00094"/>
<dbReference type="Proteomes" id="UP000001725">
    <property type="component" value="Chromosome"/>
</dbReference>
<dbReference type="GO" id="GO:0005829">
    <property type="term" value="C:cytosol"/>
    <property type="evidence" value="ECO:0007669"/>
    <property type="project" value="TreeGrafter"/>
</dbReference>
<dbReference type="GO" id="GO:0016020">
    <property type="term" value="C:membrane"/>
    <property type="evidence" value="ECO:0007669"/>
    <property type="project" value="GOC"/>
</dbReference>
<dbReference type="GO" id="GO:0000035">
    <property type="term" value="F:acyl binding"/>
    <property type="evidence" value="ECO:0007669"/>
    <property type="project" value="TreeGrafter"/>
</dbReference>
<dbReference type="GO" id="GO:0000036">
    <property type="term" value="F:acyl carrier activity"/>
    <property type="evidence" value="ECO:0007669"/>
    <property type="project" value="UniProtKB-UniRule"/>
</dbReference>
<dbReference type="GO" id="GO:0031177">
    <property type="term" value="F:phosphopantetheine binding"/>
    <property type="evidence" value="ECO:0007669"/>
    <property type="project" value="InterPro"/>
</dbReference>
<dbReference type="GO" id="GO:0009245">
    <property type="term" value="P:lipid A biosynthetic process"/>
    <property type="evidence" value="ECO:0007669"/>
    <property type="project" value="TreeGrafter"/>
</dbReference>
<dbReference type="FunFam" id="1.10.1200.10:FF:000012">
    <property type="entry name" value="Acyl carrier protein"/>
    <property type="match status" value="1"/>
</dbReference>
<dbReference type="Gene3D" id="1.10.1200.10">
    <property type="entry name" value="ACP-like"/>
    <property type="match status" value="1"/>
</dbReference>
<dbReference type="HAMAP" id="MF_01217">
    <property type="entry name" value="Acyl_carrier"/>
    <property type="match status" value="1"/>
</dbReference>
<dbReference type="InterPro" id="IPR003231">
    <property type="entry name" value="ACP"/>
</dbReference>
<dbReference type="InterPro" id="IPR036736">
    <property type="entry name" value="ACP-like_sf"/>
</dbReference>
<dbReference type="InterPro" id="IPR020806">
    <property type="entry name" value="PKS_PP-bd"/>
</dbReference>
<dbReference type="InterPro" id="IPR009081">
    <property type="entry name" value="PP-bd_ACP"/>
</dbReference>
<dbReference type="InterPro" id="IPR006162">
    <property type="entry name" value="Ppantetheine_attach_site"/>
</dbReference>
<dbReference type="NCBIfam" id="TIGR00517">
    <property type="entry name" value="acyl_carrier"/>
    <property type="match status" value="1"/>
</dbReference>
<dbReference type="NCBIfam" id="NF002148">
    <property type="entry name" value="PRK00982.1-2"/>
    <property type="match status" value="1"/>
</dbReference>
<dbReference type="NCBIfam" id="NF002149">
    <property type="entry name" value="PRK00982.1-3"/>
    <property type="match status" value="1"/>
</dbReference>
<dbReference type="NCBIfam" id="NF002150">
    <property type="entry name" value="PRK00982.1-4"/>
    <property type="match status" value="1"/>
</dbReference>
<dbReference type="NCBIfam" id="NF002151">
    <property type="entry name" value="PRK00982.1-5"/>
    <property type="match status" value="1"/>
</dbReference>
<dbReference type="PANTHER" id="PTHR20863">
    <property type="entry name" value="ACYL CARRIER PROTEIN"/>
    <property type="match status" value="1"/>
</dbReference>
<dbReference type="PANTHER" id="PTHR20863:SF76">
    <property type="entry name" value="CARRIER DOMAIN-CONTAINING PROTEIN"/>
    <property type="match status" value="1"/>
</dbReference>
<dbReference type="Pfam" id="PF00550">
    <property type="entry name" value="PP-binding"/>
    <property type="match status" value="1"/>
</dbReference>
<dbReference type="SMART" id="SM00823">
    <property type="entry name" value="PKS_PP"/>
    <property type="match status" value="1"/>
</dbReference>
<dbReference type="SUPFAM" id="SSF47336">
    <property type="entry name" value="ACP-like"/>
    <property type="match status" value="1"/>
</dbReference>
<dbReference type="PROSITE" id="PS50075">
    <property type="entry name" value="CARRIER"/>
    <property type="match status" value="1"/>
</dbReference>
<dbReference type="PROSITE" id="PS00012">
    <property type="entry name" value="PHOSPHOPANTETHEINE"/>
    <property type="match status" value="1"/>
</dbReference>
<gene>
    <name evidence="1" type="primary">acpP</name>
    <name type="ordered locus">Rpal_3483</name>
</gene>
<reference key="1">
    <citation type="submission" date="2008-05" db="EMBL/GenBank/DDBJ databases">
        <title>Complete sequence of Rhodopseudomonas palustris TIE-1.</title>
        <authorList>
            <consortium name="US DOE Joint Genome Institute"/>
            <person name="Lucas S."/>
            <person name="Copeland A."/>
            <person name="Lapidus A."/>
            <person name="Glavina del Rio T."/>
            <person name="Dalin E."/>
            <person name="Tice H."/>
            <person name="Pitluck S."/>
            <person name="Chain P."/>
            <person name="Malfatti S."/>
            <person name="Shin M."/>
            <person name="Vergez L."/>
            <person name="Lang D."/>
            <person name="Schmutz J."/>
            <person name="Larimer F."/>
            <person name="Land M."/>
            <person name="Hauser L."/>
            <person name="Kyrpides N."/>
            <person name="Mikhailova N."/>
            <person name="Emerson D."/>
            <person name="Newman D.K."/>
            <person name="Roden E."/>
            <person name="Richardson P."/>
        </authorList>
    </citation>
    <scope>NUCLEOTIDE SEQUENCE [LARGE SCALE GENOMIC DNA]</scope>
    <source>
        <strain>TIE-1</strain>
    </source>
</reference>
<sequence>MSEIGERVKKIVVEHLGVEPEKVVDSASFIDDLGADSLDTVELVMAFEEEFGCEIPDDAAETILTVGDATKFLEKNAKS</sequence>
<keyword id="KW-0963">Cytoplasm</keyword>
<keyword id="KW-0275">Fatty acid biosynthesis</keyword>
<keyword id="KW-0276">Fatty acid metabolism</keyword>
<keyword id="KW-0444">Lipid biosynthesis</keyword>
<keyword id="KW-0443">Lipid metabolism</keyword>
<keyword id="KW-0596">Phosphopantetheine</keyword>
<keyword id="KW-0597">Phosphoprotein</keyword>